<proteinExistence type="evidence at protein level"/>
<sequence>MEALGPGGDRASPASSTSSLDLWHLSMRADSAYSSFSAASGGPEPRTQSPGTDLLPYLDWDYVRVVWGGPGPAPPDAALCTSPRPRPAVAARSGPQPTEVPGTPGPLNRQATPLLYALAAEAEAAAQAAEPPSPPASRAAYRQRLQGAQRRVLRETSFQRKELRMSLPARLRPTVPARPPATHPRSASLSHPGGEGEPARSRAPAPGTAGRGPLANQQRKWCFSEPGKLDRVGRGGGPARECLGEACSSSGLPGPEPLEFQHPALAKFEDHEVGWLPETQPQGSMNLDSGSLKLGDAFRPASRSRSASGEVLGSWGGSGGTIPIVQAVPQGAETPRPLFQTKLSRFLPQKEAAVMYPAELPQSSPADSEQRVSETCIVPAWLPSLPDEVFLEEAPLVRMRSPPDPHASQGPPASVHASDQPYGTGLGQRTGQVTVPTEYPLHECPGTAGADDCWQGVNGSVGISRPTSHTPTGTANDNIPTIDPTGLTTNPPTAAESDLLKPVPADALGLSGNDTPGPSHNTALARGTGQPGSRPTWPSQCLEELVQELARLDPSLCDPLASQPSPEPPLGLLDGLIPLAEVRAAMRPACGEAGEEAASTFEPGSYQFSFTQLLPAPREETRLENPATHPVLDQPCGQGLPAPNNSIQGKKVELAARLQKMLQDLHTEQERLQGEAQAWARRQAALEAAVRQACAPQELERFSRFMADLERVLGLLLLLGSRLARVRRALARAASDSDPDEQASLLQRLRLLQRQEEDAKELKEHVARRERAVREVLVRALPVEELRVYCALLAGKAAVLAQQRNLDERIRLLQDQLDAIRDDLGHHAPSPSPARPPGTCPPVQPPFPLLLT</sequence>
<keyword id="KW-0007">Acetylation</keyword>
<keyword id="KW-0009">Actin-binding</keyword>
<keyword id="KW-0025">Alternative splicing</keyword>
<keyword id="KW-0963">Cytoplasm</keyword>
<keyword id="KW-0206">Cytoskeleton</keyword>
<keyword id="KW-0493">Microtubule</keyword>
<keyword id="KW-0597">Phosphoprotein</keyword>
<keyword id="KW-1267">Proteomics identification</keyword>
<keyword id="KW-1185">Reference proteome</keyword>
<protein>
    <recommendedName>
        <fullName>Protein Shroom1</fullName>
    </recommendedName>
    <alternativeName>
        <fullName>Apical protein 2</fullName>
    </alternativeName>
</protein>
<dbReference type="EMBL" id="AF314142">
    <property type="protein sequence ID" value="AAM15526.1"/>
    <property type="molecule type" value="mRNA"/>
</dbReference>
<dbReference type="EMBL" id="AB075840">
    <property type="protein sequence ID" value="BAB85546.1"/>
    <property type="status" value="ALT_INIT"/>
    <property type="molecule type" value="mRNA"/>
</dbReference>
<dbReference type="EMBL" id="AC004775">
    <property type="status" value="NOT_ANNOTATED_CDS"/>
    <property type="molecule type" value="Genomic_DNA"/>
</dbReference>
<dbReference type="EMBL" id="CH471062">
    <property type="protein sequence ID" value="EAW62311.1"/>
    <property type="molecule type" value="Genomic_DNA"/>
</dbReference>
<dbReference type="EMBL" id="CH471062">
    <property type="protein sequence ID" value="EAW62312.1"/>
    <property type="molecule type" value="Genomic_DNA"/>
</dbReference>
<dbReference type="EMBL" id="BC104914">
    <property type="protein sequence ID" value="AAI04915.1"/>
    <property type="molecule type" value="mRNA"/>
</dbReference>
<dbReference type="EMBL" id="BC104916">
    <property type="protein sequence ID" value="AAI04917.1"/>
    <property type="molecule type" value="mRNA"/>
</dbReference>
<dbReference type="EMBL" id="BC143494">
    <property type="protein sequence ID" value="AAI43495.1"/>
    <property type="molecule type" value="mRNA"/>
</dbReference>
<dbReference type="CCDS" id="CCDS4161.1">
    <molecule id="Q2M3G4-2"/>
</dbReference>
<dbReference type="CCDS" id="CCDS54902.1">
    <molecule id="Q2M3G4-1"/>
</dbReference>
<dbReference type="RefSeq" id="NP_001166171.1">
    <molecule id="Q2M3G4-1"/>
    <property type="nucleotide sequence ID" value="NM_001172700.2"/>
</dbReference>
<dbReference type="RefSeq" id="NP_597713.2">
    <molecule id="Q2M3G4-2"/>
    <property type="nucleotide sequence ID" value="NM_133456.3"/>
</dbReference>
<dbReference type="RefSeq" id="XP_005271942.1">
    <molecule id="Q2M3G4-1"/>
    <property type="nucleotide sequence ID" value="XM_005271885.5"/>
</dbReference>
<dbReference type="RefSeq" id="XP_005271943.1">
    <molecule id="Q2M3G4-1"/>
    <property type="nucleotide sequence ID" value="XM_005271886.4"/>
</dbReference>
<dbReference type="RefSeq" id="XP_011541469.1">
    <property type="nucleotide sequence ID" value="XM_011543167.2"/>
</dbReference>
<dbReference type="RefSeq" id="XP_047272686.1">
    <molecule id="Q2M3G4-1"/>
    <property type="nucleotide sequence ID" value="XM_047416730.1"/>
</dbReference>
<dbReference type="RefSeq" id="XP_047272687.1">
    <molecule id="Q2M3G4-1"/>
    <property type="nucleotide sequence ID" value="XM_047416731.1"/>
</dbReference>
<dbReference type="RefSeq" id="XP_047272688.1">
    <molecule id="Q2M3G4-1"/>
    <property type="nucleotide sequence ID" value="XM_047416732.1"/>
</dbReference>
<dbReference type="RefSeq" id="XP_054207620.1">
    <molecule id="Q2M3G4-1"/>
    <property type="nucleotide sequence ID" value="XM_054351645.1"/>
</dbReference>
<dbReference type="RefSeq" id="XP_054207621.1">
    <molecule id="Q2M3G4-1"/>
    <property type="nucleotide sequence ID" value="XM_054351646.1"/>
</dbReference>
<dbReference type="RefSeq" id="XP_054207622.1">
    <molecule id="Q2M3G4-1"/>
    <property type="nucleotide sequence ID" value="XM_054351647.1"/>
</dbReference>
<dbReference type="SMR" id="Q2M3G4"/>
<dbReference type="BioGRID" id="126408">
    <property type="interactions" value="20"/>
</dbReference>
<dbReference type="DIP" id="DIP-42367N"/>
<dbReference type="FunCoup" id="Q2M3G4">
    <property type="interactions" value="15"/>
</dbReference>
<dbReference type="IntAct" id="Q2M3G4">
    <property type="interactions" value="13"/>
</dbReference>
<dbReference type="MINT" id="Q2M3G4"/>
<dbReference type="STRING" id="9606.ENSP00000367950"/>
<dbReference type="iPTMnet" id="Q2M3G4"/>
<dbReference type="PhosphoSitePlus" id="Q2M3G4"/>
<dbReference type="BioMuta" id="SHROOM1"/>
<dbReference type="DMDM" id="121941488"/>
<dbReference type="jPOST" id="Q2M3G4"/>
<dbReference type="MassIVE" id="Q2M3G4"/>
<dbReference type="PaxDb" id="9606-ENSP00000367950"/>
<dbReference type="PeptideAtlas" id="Q2M3G4"/>
<dbReference type="ProteomicsDB" id="61376">
    <molecule id="Q2M3G4-1"/>
</dbReference>
<dbReference type="ProteomicsDB" id="61377">
    <molecule id="Q2M3G4-2"/>
</dbReference>
<dbReference type="Pumba" id="Q2M3G4"/>
<dbReference type="Antibodypedia" id="64246">
    <property type="antibodies" value="50 antibodies from 21 providers"/>
</dbReference>
<dbReference type="DNASU" id="134549"/>
<dbReference type="Ensembl" id="ENST00000319854.7">
    <molecule id="Q2M3G4-2"/>
    <property type="protein sequence ID" value="ENSP00000324245.3"/>
    <property type="gene ID" value="ENSG00000164403.15"/>
</dbReference>
<dbReference type="Ensembl" id="ENST00000378679.8">
    <molecule id="Q2M3G4-1"/>
    <property type="protein sequence ID" value="ENSP00000367950.3"/>
    <property type="gene ID" value="ENSG00000164403.15"/>
</dbReference>
<dbReference type="Ensembl" id="ENST00000617339.4">
    <molecule id="Q2M3G4-1"/>
    <property type="protein sequence ID" value="ENSP00000478436.1"/>
    <property type="gene ID" value="ENSG00000164403.15"/>
</dbReference>
<dbReference type="GeneID" id="134549"/>
<dbReference type="KEGG" id="hsa:134549"/>
<dbReference type="MANE-Select" id="ENST00000378679.8">
    <property type="protein sequence ID" value="ENSP00000367950.3"/>
    <property type="RefSeq nucleotide sequence ID" value="NM_001172700.2"/>
    <property type="RefSeq protein sequence ID" value="NP_001166171.1"/>
</dbReference>
<dbReference type="UCSC" id="uc003kxx.3">
    <molecule id="Q2M3G4-1"/>
    <property type="organism name" value="human"/>
</dbReference>
<dbReference type="AGR" id="HGNC:24084"/>
<dbReference type="CTD" id="134549"/>
<dbReference type="GeneCards" id="SHROOM1"/>
<dbReference type="HGNC" id="HGNC:24084">
    <property type="gene designation" value="SHROOM1"/>
</dbReference>
<dbReference type="HPA" id="ENSG00000164403">
    <property type="expression patterns" value="Tissue enhanced (liver, prostate, urinary bladder)"/>
</dbReference>
<dbReference type="MIM" id="611179">
    <property type="type" value="gene"/>
</dbReference>
<dbReference type="neXtProt" id="NX_Q2M3G4"/>
<dbReference type="OpenTargets" id="ENSG00000164403"/>
<dbReference type="PharmGKB" id="PA147357345"/>
<dbReference type="VEuPathDB" id="HostDB:ENSG00000164403"/>
<dbReference type="eggNOG" id="ENOG502SM3B">
    <property type="taxonomic scope" value="Eukaryota"/>
</dbReference>
<dbReference type="GeneTree" id="ENSGT00940000160656"/>
<dbReference type="InParanoid" id="Q2M3G4"/>
<dbReference type="OMA" id="CEQRASE"/>
<dbReference type="OrthoDB" id="10063560at2759"/>
<dbReference type="PAN-GO" id="Q2M3G4">
    <property type="GO annotations" value="7 GO annotations based on evolutionary models"/>
</dbReference>
<dbReference type="PhylomeDB" id="Q2M3G4"/>
<dbReference type="TreeFam" id="TF335754"/>
<dbReference type="PathwayCommons" id="Q2M3G4"/>
<dbReference type="SignaLink" id="Q2M3G4"/>
<dbReference type="BioGRID-ORCS" id="134549">
    <property type="hits" value="10 hits in 1156 CRISPR screens"/>
</dbReference>
<dbReference type="ChiTaRS" id="SHROOM1">
    <property type="organism name" value="human"/>
</dbReference>
<dbReference type="GenomeRNAi" id="134549"/>
<dbReference type="Pharos" id="Q2M3G4">
    <property type="development level" value="Tdark"/>
</dbReference>
<dbReference type="PRO" id="PR:Q2M3G4"/>
<dbReference type="Proteomes" id="UP000005640">
    <property type="component" value="Chromosome 5"/>
</dbReference>
<dbReference type="RNAct" id="Q2M3G4">
    <property type="molecule type" value="protein"/>
</dbReference>
<dbReference type="Bgee" id="ENSG00000164403">
    <property type="expression patterns" value="Expressed in pancreatic ductal cell and 174 other cell types or tissues"/>
</dbReference>
<dbReference type="ExpressionAtlas" id="Q2M3G4">
    <property type="expression patterns" value="baseline and differential"/>
</dbReference>
<dbReference type="GO" id="GO:0005912">
    <property type="term" value="C:adherens junction"/>
    <property type="evidence" value="ECO:0000318"/>
    <property type="project" value="GO_Central"/>
</dbReference>
<dbReference type="GO" id="GO:0043296">
    <property type="term" value="C:apical junction complex"/>
    <property type="evidence" value="ECO:0000318"/>
    <property type="project" value="GO_Central"/>
</dbReference>
<dbReference type="GO" id="GO:0016324">
    <property type="term" value="C:apical plasma membrane"/>
    <property type="evidence" value="ECO:0000318"/>
    <property type="project" value="GO_Central"/>
</dbReference>
<dbReference type="GO" id="GO:0030864">
    <property type="term" value="C:cortical actin cytoskeleton"/>
    <property type="evidence" value="ECO:0000318"/>
    <property type="project" value="GO_Central"/>
</dbReference>
<dbReference type="GO" id="GO:0005874">
    <property type="term" value="C:microtubule"/>
    <property type="evidence" value="ECO:0007669"/>
    <property type="project" value="UniProtKB-KW"/>
</dbReference>
<dbReference type="GO" id="GO:0051015">
    <property type="term" value="F:actin filament binding"/>
    <property type="evidence" value="ECO:0000250"/>
    <property type="project" value="HGNC"/>
</dbReference>
<dbReference type="GO" id="GO:0045159">
    <property type="term" value="F:myosin II binding"/>
    <property type="evidence" value="ECO:0000250"/>
    <property type="project" value="HGNC"/>
</dbReference>
<dbReference type="GO" id="GO:0051017">
    <property type="term" value="P:actin filament bundle assembly"/>
    <property type="evidence" value="ECO:0000250"/>
    <property type="project" value="HGNC"/>
</dbReference>
<dbReference type="GO" id="GO:0000902">
    <property type="term" value="P:cell morphogenesis"/>
    <property type="evidence" value="ECO:0000250"/>
    <property type="project" value="HGNC"/>
</dbReference>
<dbReference type="Gene3D" id="6.10.250.3120">
    <property type="match status" value="1"/>
</dbReference>
<dbReference type="InterPro" id="IPR014800">
    <property type="entry name" value="ASD1_dom"/>
</dbReference>
<dbReference type="InterPro" id="IPR014799">
    <property type="entry name" value="ASD2_dom"/>
</dbReference>
<dbReference type="InterPro" id="IPR027685">
    <property type="entry name" value="Shroom_fam"/>
</dbReference>
<dbReference type="PANTHER" id="PTHR15012">
    <property type="entry name" value="APICAL PROTEIN/SHROOM-RELATED"/>
    <property type="match status" value="1"/>
</dbReference>
<dbReference type="PANTHER" id="PTHR15012:SF37">
    <property type="entry name" value="PROTEIN SHROOM1"/>
    <property type="match status" value="1"/>
</dbReference>
<dbReference type="Pfam" id="PF08688">
    <property type="entry name" value="ASD1"/>
    <property type="match status" value="1"/>
</dbReference>
<dbReference type="Pfam" id="PF08687">
    <property type="entry name" value="ASD2"/>
    <property type="match status" value="1"/>
</dbReference>
<dbReference type="PROSITE" id="PS51306">
    <property type="entry name" value="ASD1"/>
    <property type="match status" value="1"/>
</dbReference>
<dbReference type="PROSITE" id="PS51307">
    <property type="entry name" value="ASD2"/>
    <property type="match status" value="1"/>
</dbReference>
<organism>
    <name type="scientific">Homo sapiens</name>
    <name type="common">Human</name>
    <dbReference type="NCBI Taxonomy" id="9606"/>
    <lineage>
        <taxon>Eukaryota</taxon>
        <taxon>Metazoa</taxon>
        <taxon>Chordata</taxon>
        <taxon>Craniata</taxon>
        <taxon>Vertebrata</taxon>
        <taxon>Euteleostomi</taxon>
        <taxon>Mammalia</taxon>
        <taxon>Eutheria</taxon>
        <taxon>Euarchontoglires</taxon>
        <taxon>Primates</taxon>
        <taxon>Haplorrhini</taxon>
        <taxon>Catarrhini</taxon>
        <taxon>Hominidae</taxon>
        <taxon>Homo</taxon>
    </lineage>
</organism>
<comment type="function">
    <text evidence="1">May be involved in the assembly of microtubule arrays during cell elongation.</text>
</comment>
<comment type="subunit">
    <text evidence="1">Interacts with F-actin.</text>
</comment>
<comment type="subcellular location">
    <subcellularLocation>
        <location evidence="1">Cytoplasm</location>
        <location evidence="1">Cytoskeleton</location>
    </subcellularLocation>
</comment>
<comment type="alternative products">
    <event type="alternative splicing"/>
    <isoform>
        <id>Q2M3G4-1</id>
        <name>1</name>
        <sequence type="displayed"/>
    </isoform>
    <isoform>
        <id>Q2M3G4-2</id>
        <name>2</name>
        <sequence type="described" ref="VSP_024962"/>
    </isoform>
</comment>
<comment type="domain">
    <text evidence="1">The ASD1 domain mediates F-actin binding.</text>
</comment>
<comment type="similarity">
    <text evidence="6">Belongs to the shroom family.</text>
</comment>
<comment type="sequence caution" evidence="6">
    <conflict type="erroneous initiation">
        <sequence resource="EMBL-CDS" id="BAB85546"/>
    </conflict>
</comment>
<gene>
    <name type="primary">SHROOM1</name>
    <name type="synonym">APXL2</name>
    <name type="synonym">KIAA1960</name>
</gene>
<accession>Q2M3G4</accession>
<accession>B7WP40</accession>
<accession>B7ZL01</accession>
<accession>Q8TDP0</accession>
<accession>Q8TF41</accession>
<feature type="chain" id="PRO_0000286061" description="Protein Shroom1">
    <location>
        <begin position="1"/>
        <end position="852"/>
    </location>
</feature>
<feature type="domain" description="ASD1" evidence="2">
    <location>
        <begin position="145"/>
        <end position="233"/>
    </location>
</feature>
<feature type="domain" description="ASD2" evidence="3">
    <location>
        <begin position="543"/>
        <end position="825"/>
    </location>
</feature>
<feature type="region of interest" description="Disordered" evidence="4">
    <location>
        <begin position="34"/>
        <end position="54"/>
    </location>
</feature>
<feature type="region of interest" description="Disordered" evidence="4">
    <location>
        <begin position="81"/>
        <end position="109"/>
    </location>
</feature>
<feature type="region of interest" description="Disordered" evidence="4">
    <location>
        <begin position="125"/>
        <end position="218"/>
    </location>
</feature>
<feature type="region of interest" description="Disordered" evidence="4">
    <location>
        <begin position="276"/>
        <end position="320"/>
    </location>
</feature>
<feature type="region of interest" description="Disordered" evidence="4">
    <location>
        <begin position="399"/>
        <end position="431"/>
    </location>
</feature>
<feature type="region of interest" description="Disordered" evidence="4">
    <location>
        <begin position="464"/>
        <end position="496"/>
    </location>
</feature>
<feature type="region of interest" description="Disordered" evidence="4">
    <location>
        <begin position="823"/>
        <end position="852"/>
    </location>
</feature>
<feature type="compositionally biased region" description="Low complexity" evidence="4">
    <location>
        <begin position="125"/>
        <end position="144"/>
    </location>
</feature>
<feature type="compositionally biased region" description="Basic and acidic residues" evidence="4">
    <location>
        <begin position="152"/>
        <end position="164"/>
    </location>
</feature>
<feature type="compositionally biased region" description="Polar residues" evidence="4">
    <location>
        <begin position="279"/>
        <end position="289"/>
    </location>
</feature>
<feature type="compositionally biased region" description="Low complexity" evidence="4">
    <location>
        <begin position="301"/>
        <end position="313"/>
    </location>
</feature>
<feature type="compositionally biased region" description="Polar residues" evidence="4">
    <location>
        <begin position="465"/>
        <end position="479"/>
    </location>
</feature>
<feature type="compositionally biased region" description="Pro residues" evidence="4">
    <location>
        <begin position="830"/>
        <end position="852"/>
    </location>
</feature>
<feature type="modified residue" description="N-acetylmethionine" evidence="7">
    <location>
        <position position="1"/>
    </location>
</feature>
<feature type="modified residue" description="Phosphoserine" evidence="8">
    <location>
        <position position="18"/>
    </location>
</feature>
<feature type="modified residue" description="Phosphothreonine" evidence="8 9">
    <location>
        <position position="103"/>
    </location>
</feature>
<feature type="modified residue" description="Phosphoserine" evidence="9">
    <location>
        <position position="133"/>
    </location>
</feature>
<feature type="modified residue" description="Phosphoserine" evidence="9">
    <location>
        <position position="137"/>
    </location>
</feature>
<feature type="modified residue" description="Phosphoserine" evidence="8">
    <location>
        <position position="166"/>
    </location>
</feature>
<feature type="modified residue" description="Phosphoserine" evidence="8">
    <location>
        <position position="190"/>
    </location>
</feature>
<feature type="modified residue" description="Phosphoserine" evidence="8">
    <location>
        <position position="224"/>
    </location>
</feature>
<feature type="splice variant" id="VSP_024962" description="In isoform 2." evidence="5">
    <location>
        <begin position="742"/>
        <end position="746"/>
    </location>
</feature>
<feature type="sequence variant" id="VAR_032061" description="In dbSNP:rs2292030.">
    <original>P</original>
    <variation>L</variation>
    <location>
        <position position="180"/>
    </location>
</feature>
<feature type="sequence conflict" description="In Ref. 1; AAM15526." evidence="6" ref="1">
    <original>A</original>
    <variation>V</variation>
    <location>
        <position position="129"/>
    </location>
</feature>
<reference key="1">
    <citation type="submission" date="2000-10" db="EMBL/GenBank/DDBJ databases">
        <title>The cytoplasmic tail of the melanoma cell adhesion molecule MCAM mediates selective binding of APXL2, a new member of the Apx/Shroom actin-binding protein family.</title>
        <authorList>
            <person name="Karlen S."/>
            <person name="Staub O."/>
            <person name="Rohrbach B."/>
            <person name="Braathen L.R."/>
        </authorList>
    </citation>
    <scope>NUCLEOTIDE SEQUENCE [MRNA] (ISOFORM 2)</scope>
    <source>
        <tissue>Brain</tissue>
    </source>
</reference>
<reference key="2">
    <citation type="journal article" date="2001" name="DNA Res.">
        <title>Prediction of the coding sequences of unidentified human genes. XXII. The complete sequences of 50 new cDNA clones which code for large proteins.</title>
        <authorList>
            <person name="Nagase T."/>
            <person name="Kikuno R."/>
            <person name="Ohara O."/>
        </authorList>
    </citation>
    <scope>NUCLEOTIDE SEQUENCE [LARGE SCALE MRNA] (ISOFORM 1)</scope>
    <source>
        <tissue>Brain</tissue>
    </source>
</reference>
<reference key="3">
    <citation type="journal article" date="2004" name="Nature">
        <title>The DNA sequence and comparative analysis of human chromosome 5.</title>
        <authorList>
            <person name="Schmutz J."/>
            <person name="Martin J."/>
            <person name="Terry A."/>
            <person name="Couronne O."/>
            <person name="Grimwood J."/>
            <person name="Lowry S."/>
            <person name="Gordon L.A."/>
            <person name="Scott D."/>
            <person name="Xie G."/>
            <person name="Huang W."/>
            <person name="Hellsten U."/>
            <person name="Tran-Gyamfi M."/>
            <person name="She X."/>
            <person name="Prabhakar S."/>
            <person name="Aerts A."/>
            <person name="Altherr M."/>
            <person name="Bajorek E."/>
            <person name="Black S."/>
            <person name="Branscomb E."/>
            <person name="Caoile C."/>
            <person name="Challacombe J.F."/>
            <person name="Chan Y.M."/>
            <person name="Denys M."/>
            <person name="Detter J.C."/>
            <person name="Escobar J."/>
            <person name="Flowers D."/>
            <person name="Fotopulos D."/>
            <person name="Glavina T."/>
            <person name="Gomez M."/>
            <person name="Gonzales E."/>
            <person name="Goodstein D."/>
            <person name="Grigoriev I."/>
            <person name="Groza M."/>
            <person name="Hammon N."/>
            <person name="Hawkins T."/>
            <person name="Haydu L."/>
            <person name="Israni S."/>
            <person name="Jett J."/>
            <person name="Kadner K."/>
            <person name="Kimball H."/>
            <person name="Kobayashi A."/>
            <person name="Lopez F."/>
            <person name="Lou Y."/>
            <person name="Martinez D."/>
            <person name="Medina C."/>
            <person name="Morgan J."/>
            <person name="Nandkeshwar R."/>
            <person name="Noonan J.P."/>
            <person name="Pitluck S."/>
            <person name="Pollard M."/>
            <person name="Predki P."/>
            <person name="Priest J."/>
            <person name="Ramirez L."/>
            <person name="Retterer J."/>
            <person name="Rodriguez A."/>
            <person name="Rogers S."/>
            <person name="Salamov A."/>
            <person name="Salazar A."/>
            <person name="Thayer N."/>
            <person name="Tice H."/>
            <person name="Tsai M."/>
            <person name="Ustaszewska A."/>
            <person name="Vo N."/>
            <person name="Wheeler J."/>
            <person name="Wu K."/>
            <person name="Yang J."/>
            <person name="Dickson M."/>
            <person name="Cheng J.-F."/>
            <person name="Eichler E.E."/>
            <person name="Olsen A."/>
            <person name="Pennacchio L.A."/>
            <person name="Rokhsar D.S."/>
            <person name="Richardson P."/>
            <person name="Lucas S.M."/>
            <person name="Myers R.M."/>
            <person name="Rubin E.M."/>
        </authorList>
    </citation>
    <scope>NUCLEOTIDE SEQUENCE [LARGE SCALE GENOMIC DNA]</scope>
</reference>
<reference key="4">
    <citation type="submission" date="2005-09" db="EMBL/GenBank/DDBJ databases">
        <authorList>
            <person name="Mural R.J."/>
            <person name="Istrail S."/>
            <person name="Sutton G.G."/>
            <person name="Florea L."/>
            <person name="Halpern A.L."/>
            <person name="Mobarry C.M."/>
            <person name="Lippert R."/>
            <person name="Walenz B."/>
            <person name="Shatkay H."/>
            <person name="Dew I."/>
            <person name="Miller J.R."/>
            <person name="Flanigan M.J."/>
            <person name="Edwards N.J."/>
            <person name="Bolanos R."/>
            <person name="Fasulo D."/>
            <person name="Halldorsson B.V."/>
            <person name="Hannenhalli S."/>
            <person name="Turner R."/>
            <person name="Yooseph S."/>
            <person name="Lu F."/>
            <person name="Nusskern D.R."/>
            <person name="Shue B.C."/>
            <person name="Zheng X.H."/>
            <person name="Zhong F."/>
            <person name="Delcher A.L."/>
            <person name="Huson D.H."/>
            <person name="Kravitz S.A."/>
            <person name="Mouchard L."/>
            <person name="Reinert K."/>
            <person name="Remington K.A."/>
            <person name="Clark A.G."/>
            <person name="Waterman M.S."/>
            <person name="Eichler E.E."/>
            <person name="Adams M.D."/>
            <person name="Hunkapiller M.W."/>
            <person name="Myers E.W."/>
            <person name="Venter J.C."/>
        </authorList>
    </citation>
    <scope>NUCLEOTIDE SEQUENCE [LARGE SCALE GENOMIC DNA]</scope>
</reference>
<reference key="5">
    <citation type="journal article" date="2004" name="Genome Res.">
        <title>The status, quality, and expansion of the NIH full-length cDNA project: the Mammalian Gene Collection (MGC).</title>
        <authorList>
            <consortium name="The MGC Project Team"/>
        </authorList>
    </citation>
    <scope>NUCLEOTIDE SEQUENCE [LARGE SCALE MRNA] (ISOFORM 1)</scope>
    <source>
        <tissue>Liver</tissue>
    </source>
</reference>
<reference key="6">
    <citation type="journal article" date="2006" name="BMC Cell Biol.">
        <title>A new standard nomenclature for proteins related to Apx and Shroom.</title>
        <authorList>
            <person name="Hagens O."/>
            <person name="Ballabio A."/>
            <person name="Kalscheuer V."/>
            <person name="Kraehenbuhl J.-P."/>
            <person name="Schiaffino M.V."/>
            <person name="Smith P."/>
            <person name="Staub O."/>
            <person name="Hildebrand J.D."/>
            <person name="Wallingford J.B."/>
        </authorList>
    </citation>
    <scope>NOMENCLATURE</scope>
</reference>
<reference key="7">
    <citation type="journal article" date="2008" name="Proc. Natl. Acad. Sci. U.S.A.">
        <title>A quantitative atlas of mitotic phosphorylation.</title>
        <authorList>
            <person name="Dephoure N."/>
            <person name="Zhou C."/>
            <person name="Villen J."/>
            <person name="Beausoleil S.A."/>
            <person name="Bakalarski C.E."/>
            <person name="Elledge S.J."/>
            <person name="Gygi S.P."/>
        </authorList>
    </citation>
    <scope>IDENTIFICATION BY MASS SPECTROMETRY [LARGE SCALE ANALYSIS]</scope>
    <source>
        <tissue>Cervix carcinoma</tissue>
    </source>
</reference>
<reference key="8">
    <citation type="journal article" date="2010" name="Sci. Signal.">
        <title>Quantitative phosphoproteomics reveals widespread full phosphorylation site occupancy during mitosis.</title>
        <authorList>
            <person name="Olsen J.V."/>
            <person name="Vermeulen M."/>
            <person name="Santamaria A."/>
            <person name="Kumar C."/>
            <person name="Miller M.L."/>
            <person name="Jensen L.J."/>
            <person name="Gnad F."/>
            <person name="Cox J."/>
            <person name="Jensen T.S."/>
            <person name="Nigg E.A."/>
            <person name="Brunak S."/>
            <person name="Mann M."/>
        </authorList>
    </citation>
    <scope>IDENTIFICATION BY MASS SPECTROMETRY [LARGE SCALE ANALYSIS]</scope>
    <source>
        <tissue>Cervix carcinoma</tissue>
    </source>
</reference>
<reference key="9">
    <citation type="journal article" date="2012" name="Proc. Natl. Acad. Sci. U.S.A.">
        <title>N-terminal acetylome analyses and functional insights of the N-terminal acetyltransferase NatB.</title>
        <authorList>
            <person name="Van Damme P."/>
            <person name="Lasa M."/>
            <person name="Polevoda B."/>
            <person name="Gazquez C."/>
            <person name="Elosegui-Artola A."/>
            <person name="Kim D.S."/>
            <person name="De Juan-Pardo E."/>
            <person name="Demeyer K."/>
            <person name="Hole K."/>
            <person name="Larrea E."/>
            <person name="Timmerman E."/>
            <person name="Prieto J."/>
            <person name="Arnesen T."/>
            <person name="Sherman F."/>
            <person name="Gevaert K."/>
            <person name="Aldabe R."/>
        </authorList>
    </citation>
    <scope>ACETYLATION [LARGE SCALE ANALYSIS] AT MET-1</scope>
    <scope>IDENTIFICATION BY MASS SPECTROMETRY [LARGE SCALE ANALYSIS]</scope>
</reference>
<reference key="10">
    <citation type="journal article" date="2013" name="J. Proteome Res.">
        <title>Toward a comprehensive characterization of a human cancer cell phosphoproteome.</title>
        <authorList>
            <person name="Zhou H."/>
            <person name="Di Palma S."/>
            <person name="Preisinger C."/>
            <person name="Peng M."/>
            <person name="Polat A.N."/>
            <person name="Heck A.J."/>
            <person name="Mohammed S."/>
        </authorList>
    </citation>
    <scope>PHOSPHORYLATION [LARGE SCALE ANALYSIS] AT SER-18; THR-103; SER-166; SER-190 AND SER-224</scope>
    <scope>IDENTIFICATION BY MASS SPECTROMETRY [LARGE SCALE ANALYSIS]</scope>
    <source>
        <tissue>Cervix carcinoma</tissue>
        <tissue>Erythroleukemia</tissue>
    </source>
</reference>
<reference key="11">
    <citation type="journal article" date="2014" name="J. Proteomics">
        <title>An enzyme assisted RP-RPLC approach for in-depth analysis of human liver phosphoproteome.</title>
        <authorList>
            <person name="Bian Y."/>
            <person name="Song C."/>
            <person name="Cheng K."/>
            <person name="Dong M."/>
            <person name="Wang F."/>
            <person name="Huang J."/>
            <person name="Sun D."/>
            <person name="Wang L."/>
            <person name="Ye M."/>
            <person name="Zou H."/>
        </authorList>
    </citation>
    <scope>PHOSPHORYLATION [LARGE SCALE ANALYSIS] AT THR-103; SER-133 AND SER-137</scope>
    <scope>IDENTIFICATION BY MASS SPECTROMETRY [LARGE SCALE ANALYSIS]</scope>
    <source>
        <tissue>Liver</tissue>
    </source>
</reference>
<name>SHRM1_HUMAN</name>
<evidence type="ECO:0000250" key="1"/>
<evidence type="ECO:0000255" key="2">
    <source>
        <dbReference type="PROSITE-ProRule" id="PRU00637"/>
    </source>
</evidence>
<evidence type="ECO:0000255" key="3">
    <source>
        <dbReference type="PROSITE-ProRule" id="PRU00638"/>
    </source>
</evidence>
<evidence type="ECO:0000256" key="4">
    <source>
        <dbReference type="SAM" id="MobiDB-lite"/>
    </source>
</evidence>
<evidence type="ECO:0000303" key="5">
    <source ref="1"/>
</evidence>
<evidence type="ECO:0000305" key="6"/>
<evidence type="ECO:0007744" key="7">
    <source>
    </source>
</evidence>
<evidence type="ECO:0007744" key="8">
    <source>
    </source>
</evidence>
<evidence type="ECO:0007744" key="9">
    <source>
    </source>
</evidence>